<reference key="1">
    <citation type="journal article" date="1993" name="Mol. Microbiol.">
        <title>DNA sequence, structure and gene expression of mycobacteriophage L5: a phage system for mycobacterial genetics.</title>
        <authorList>
            <person name="Hatfull G.F."/>
            <person name="Sarkis G.J."/>
        </authorList>
    </citation>
    <scope>NUCLEOTIDE SEQUENCE [LARGE SCALE GENOMIC DNA]</scope>
</reference>
<name>VG04_BPML5</name>
<protein>
    <recommendedName>
        <fullName>Gene 4 protein</fullName>
    </recommendedName>
    <alternativeName>
        <fullName>Gp4</fullName>
    </alternativeName>
</protein>
<organismHost>
    <name type="scientific">Mycobacterium</name>
    <dbReference type="NCBI Taxonomy" id="1763"/>
</organismHost>
<gene>
    <name type="primary">4</name>
</gene>
<dbReference type="EMBL" id="Z18946">
    <property type="protein sequence ID" value="CAA79383.1"/>
    <property type="molecule type" value="Genomic_DNA"/>
</dbReference>
<dbReference type="PIR" id="S30952">
    <property type="entry name" value="S30952"/>
</dbReference>
<dbReference type="RefSeq" id="NP_039671.1">
    <property type="nucleotide sequence ID" value="NC_001335.1"/>
</dbReference>
<dbReference type="SMR" id="Q05251"/>
<dbReference type="GeneID" id="2942904"/>
<dbReference type="KEGG" id="vg:2942904"/>
<dbReference type="OrthoDB" id="17914at10239"/>
<dbReference type="Proteomes" id="UP000002123">
    <property type="component" value="Genome"/>
</dbReference>
<dbReference type="GO" id="GO:0004519">
    <property type="term" value="F:endonuclease activity"/>
    <property type="evidence" value="ECO:0007669"/>
    <property type="project" value="InterPro"/>
</dbReference>
<dbReference type="GO" id="GO:0003676">
    <property type="term" value="F:nucleic acid binding"/>
    <property type="evidence" value="ECO:0007669"/>
    <property type="project" value="InterPro"/>
</dbReference>
<dbReference type="GO" id="GO:0008270">
    <property type="term" value="F:zinc ion binding"/>
    <property type="evidence" value="ECO:0007669"/>
    <property type="project" value="InterPro"/>
</dbReference>
<dbReference type="CDD" id="cd00085">
    <property type="entry name" value="HNHc"/>
    <property type="match status" value="1"/>
</dbReference>
<dbReference type="Gene3D" id="1.10.30.50">
    <property type="match status" value="1"/>
</dbReference>
<dbReference type="InterPro" id="IPR002711">
    <property type="entry name" value="HNH"/>
</dbReference>
<dbReference type="InterPro" id="IPR003615">
    <property type="entry name" value="HNH_nuc"/>
</dbReference>
<dbReference type="Pfam" id="PF01844">
    <property type="entry name" value="HNH"/>
    <property type="match status" value="1"/>
</dbReference>
<dbReference type="SMART" id="SM00507">
    <property type="entry name" value="HNHc"/>
    <property type="match status" value="1"/>
</dbReference>
<evidence type="ECO:0000256" key="1">
    <source>
        <dbReference type="SAM" id="MobiDB-lite"/>
    </source>
</evidence>
<organism>
    <name type="scientific">Mycobacterium phage L5</name>
    <name type="common">Mycobacteriophage L5</name>
    <dbReference type="NCBI Taxonomy" id="31757"/>
    <lineage>
        <taxon>Viruses</taxon>
        <taxon>Duplodnaviria</taxon>
        <taxon>Heunggongvirae</taxon>
        <taxon>Uroviricota</taxon>
        <taxon>Caudoviricetes</taxon>
        <taxon>Fromanvirus</taxon>
    </lineage>
</organism>
<proteinExistence type="predicted"/>
<sequence length="98" mass="11130">MSWAGSGRRQELPEDWELNYRLPVLSAANWLCQINGPGCVRAATDVDHIKRGNDHSRSNLQAACHVCHGKKSAAEGVARRRELRARRKRPPERHPGRR</sequence>
<feature type="chain" id="PRO_0000164703" description="Gene 4 protein">
    <location>
        <begin position="1"/>
        <end position="98"/>
    </location>
</feature>
<feature type="domain" description="HNH">
    <location>
        <begin position="38"/>
        <end position="73"/>
    </location>
</feature>
<feature type="region of interest" description="Disordered" evidence="1">
    <location>
        <begin position="75"/>
        <end position="98"/>
    </location>
</feature>
<feature type="compositionally biased region" description="Basic residues" evidence="1">
    <location>
        <begin position="81"/>
        <end position="98"/>
    </location>
</feature>
<keyword id="KW-1185">Reference proteome</keyword>
<accession>Q05251</accession>